<proteinExistence type="evidence at protein level"/>
<reference key="1">
    <citation type="journal article" date="1997" name="Nature">
        <title>The nucleotide sequence of Saccharomyces cerevisiae chromosome XII.</title>
        <authorList>
            <person name="Johnston M."/>
            <person name="Hillier L.W."/>
            <person name="Riles L."/>
            <person name="Albermann K."/>
            <person name="Andre B."/>
            <person name="Ansorge W."/>
            <person name="Benes V."/>
            <person name="Brueckner M."/>
            <person name="Delius H."/>
            <person name="Dubois E."/>
            <person name="Duesterhoeft A."/>
            <person name="Entian K.-D."/>
            <person name="Floeth M."/>
            <person name="Goffeau A."/>
            <person name="Hebling U."/>
            <person name="Heumann K."/>
            <person name="Heuss-Neitzel D."/>
            <person name="Hilbert H."/>
            <person name="Hilger F."/>
            <person name="Kleine K."/>
            <person name="Koetter P."/>
            <person name="Louis E.J."/>
            <person name="Messenguy F."/>
            <person name="Mewes H.-W."/>
            <person name="Miosga T."/>
            <person name="Moestl D."/>
            <person name="Mueller-Auer S."/>
            <person name="Nentwich U."/>
            <person name="Obermaier B."/>
            <person name="Piravandi E."/>
            <person name="Pohl T.M."/>
            <person name="Portetelle D."/>
            <person name="Purnelle B."/>
            <person name="Rechmann S."/>
            <person name="Rieger M."/>
            <person name="Rinke M."/>
            <person name="Rose M."/>
            <person name="Scharfe M."/>
            <person name="Scherens B."/>
            <person name="Scholler P."/>
            <person name="Schwager C."/>
            <person name="Schwarz S."/>
            <person name="Underwood A.P."/>
            <person name="Urrestarazu L.A."/>
            <person name="Vandenbol M."/>
            <person name="Verhasselt P."/>
            <person name="Vierendeels F."/>
            <person name="Voet M."/>
            <person name="Volckaert G."/>
            <person name="Voss H."/>
            <person name="Wambutt R."/>
            <person name="Wedler E."/>
            <person name="Wedler H."/>
            <person name="Zimmermann F.K."/>
            <person name="Zollner A."/>
            <person name="Hani J."/>
            <person name="Hoheisel J.D."/>
        </authorList>
    </citation>
    <scope>NUCLEOTIDE SEQUENCE [LARGE SCALE GENOMIC DNA]</scope>
    <source>
        <strain>ATCC 204508 / S288c</strain>
    </source>
</reference>
<reference key="2">
    <citation type="journal article" date="2014" name="G3 (Bethesda)">
        <title>The reference genome sequence of Saccharomyces cerevisiae: Then and now.</title>
        <authorList>
            <person name="Engel S.R."/>
            <person name="Dietrich F.S."/>
            <person name="Fisk D.G."/>
            <person name="Binkley G."/>
            <person name="Balakrishnan R."/>
            <person name="Costanzo M.C."/>
            <person name="Dwight S.S."/>
            <person name="Hitz B.C."/>
            <person name="Karra K."/>
            <person name="Nash R.S."/>
            <person name="Weng S."/>
            <person name="Wong E.D."/>
            <person name="Lloyd P."/>
            <person name="Skrzypek M.S."/>
            <person name="Miyasato S.R."/>
            <person name="Simison M."/>
            <person name="Cherry J.M."/>
        </authorList>
    </citation>
    <scope>GENOME REANNOTATION</scope>
    <source>
        <strain>ATCC 204508 / S288c</strain>
    </source>
</reference>
<reference key="3">
    <citation type="journal article" date="2007" name="Genome Res.">
        <title>Approaching a complete repository of sequence-verified protein-encoding clones for Saccharomyces cerevisiae.</title>
        <authorList>
            <person name="Hu Y."/>
            <person name="Rolfs A."/>
            <person name="Bhullar B."/>
            <person name="Murthy T.V.S."/>
            <person name="Zhu C."/>
            <person name="Berger M.F."/>
            <person name="Camargo A.A."/>
            <person name="Kelley F."/>
            <person name="McCarron S."/>
            <person name="Jepson D."/>
            <person name="Richardson A."/>
            <person name="Raphael J."/>
            <person name="Moreira D."/>
            <person name="Taycher E."/>
            <person name="Zuo D."/>
            <person name="Mohr S."/>
            <person name="Kane M.F."/>
            <person name="Williamson J."/>
            <person name="Simpson A.J.G."/>
            <person name="Bulyk M.L."/>
            <person name="Harlow E."/>
            <person name="Marsischky G."/>
            <person name="Kolodner R.D."/>
            <person name="LaBaer J."/>
        </authorList>
    </citation>
    <scope>NUCLEOTIDE SEQUENCE [GENOMIC DNA]</scope>
    <source>
        <strain>ATCC 204508 / S288c</strain>
    </source>
</reference>
<reference key="4">
    <citation type="journal article" date="2003" name="Nature">
        <title>Global analysis of protein localization in budding yeast.</title>
        <authorList>
            <person name="Huh W.-K."/>
            <person name="Falvo J.V."/>
            <person name="Gerke L.C."/>
            <person name="Carroll A.S."/>
            <person name="Howson R.W."/>
            <person name="Weissman J.S."/>
            <person name="O'Shea E.K."/>
        </authorList>
    </citation>
    <scope>SUBCELLULAR LOCATION [LARGE SCALE ANALYSIS]</scope>
</reference>
<reference key="5">
    <citation type="journal article" date="2003" name="Nature">
        <title>Global analysis of protein expression in yeast.</title>
        <authorList>
            <person name="Ghaemmaghami S."/>
            <person name="Huh W.-K."/>
            <person name="Bower K."/>
            <person name="Howson R.W."/>
            <person name="Belle A."/>
            <person name="Dephoure N."/>
            <person name="O'Shea E.K."/>
            <person name="Weissman J.S."/>
        </authorList>
    </citation>
    <scope>LEVEL OF PROTEIN EXPRESSION [LARGE SCALE ANALYSIS]</scope>
</reference>
<reference key="6">
    <citation type="journal article" date="2009" name="Cell">
        <title>An inhibitor of a deubiquitinating enzyme regulates ubiquitin homeostasis.</title>
        <authorList>
            <person name="Kimura Y."/>
            <person name="Yashiroda H."/>
            <person name="Kudo T."/>
            <person name="Koitabashi S."/>
            <person name="Murata S."/>
            <person name="Kakizuka A."/>
            <person name="Tanaka K."/>
        </authorList>
    </citation>
    <scope>FUNCTION</scope>
    <scope>INTERACTION WITH BRO1 AND DOA4</scope>
</reference>
<accession>Q08003</accession>
<accession>D6VY74</accession>
<comment type="function">
    <text evidence="3">Inhibitor of the DOA4 deubiquitinase involved in the regulation of protein degradation by the proteasome and maintenance of a normal level of free ubiquitin.</text>
</comment>
<comment type="subunit">
    <text evidence="3">Interacts with BRO1 and DOA4.</text>
</comment>
<comment type="interaction">
    <interactant intactId="EBI-2353109">
        <id>Q08003</id>
    </interactant>
    <interactant intactId="EBI-3768">
        <id>P48582</id>
        <label>BRO1</label>
    </interactant>
    <organismsDiffer>false</organismsDiffer>
    <experiments>2</experiments>
</comment>
<comment type="interaction">
    <interactant intactId="EBI-2353109">
        <id>Q08003</id>
    </interactant>
    <interactant intactId="EBI-19840">
        <id>P32571</id>
        <label>DOA4</label>
    </interactant>
    <organismsDiffer>false</organismsDiffer>
    <experiments>2</experiments>
</comment>
<comment type="subcellular location">
    <subcellularLocation>
        <location evidence="1">Endosome</location>
    </subcellularLocation>
</comment>
<comment type="miscellaneous">
    <text evidence="2">Present with 377 molecules/cell in log phase SD medium.</text>
</comment>
<comment type="similarity">
    <text evidence="4">Belongs to the RFU1 family.</text>
</comment>
<dbReference type="EMBL" id="Z73245">
    <property type="protein sequence ID" value="CAA97630.1"/>
    <property type="molecule type" value="Genomic_DNA"/>
</dbReference>
<dbReference type="EMBL" id="AY558532">
    <property type="protein sequence ID" value="AAS56858.1"/>
    <property type="molecule type" value="Genomic_DNA"/>
</dbReference>
<dbReference type="EMBL" id="BK006945">
    <property type="protein sequence ID" value="DAA09390.1"/>
    <property type="molecule type" value="Genomic_DNA"/>
</dbReference>
<dbReference type="PIR" id="S64905">
    <property type="entry name" value="S64905"/>
</dbReference>
<dbReference type="RefSeq" id="NP_013174.1">
    <property type="nucleotide sequence ID" value="NM_001181960.1"/>
</dbReference>
<dbReference type="SMR" id="Q08003"/>
<dbReference type="BioGRID" id="31347">
    <property type="interactions" value="50"/>
</dbReference>
<dbReference type="FunCoup" id="Q08003">
    <property type="interactions" value="49"/>
</dbReference>
<dbReference type="IntAct" id="Q08003">
    <property type="interactions" value="2"/>
</dbReference>
<dbReference type="MINT" id="Q08003"/>
<dbReference type="STRING" id="4932.YLR073C"/>
<dbReference type="PaxDb" id="4932-YLR073C"/>
<dbReference type="PeptideAtlas" id="Q08003"/>
<dbReference type="EnsemblFungi" id="YLR073C_mRNA">
    <property type="protein sequence ID" value="YLR073C"/>
    <property type="gene ID" value="YLR073C"/>
</dbReference>
<dbReference type="GeneID" id="850762"/>
<dbReference type="KEGG" id="sce:YLR073C"/>
<dbReference type="AGR" id="SGD:S000004063"/>
<dbReference type="SGD" id="S000004063">
    <property type="gene designation" value="RFU1"/>
</dbReference>
<dbReference type="VEuPathDB" id="FungiDB:YLR073C"/>
<dbReference type="eggNOG" id="ENOG502S3ZX">
    <property type="taxonomic scope" value="Eukaryota"/>
</dbReference>
<dbReference type="HOGENOM" id="CLU_1348926_0_0_1"/>
<dbReference type="InParanoid" id="Q08003"/>
<dbReference type="OMA" id="KSCHELS"/>
<dbReference type="OrthoDB" id="3640at2759"/>
<dbReference type="BioCyc" id="YEAST:G3O-32225-MONOMER"/>
<dbReference type="BioGRID-ORCS" id="850762">
    <property type="hits" value="1 hit in 10 CRISPR screens"/>
</dbReference>
<dbReference type="PRO" id="PR:Q08003"/>
<dbReference type="Proteomes" id="UP000002311">
    <property type="component" value="Chromosome XII"/>
</dbReference>
<dbReference type="RNAct" id="Q08003">
    <property type="molecule type" value="protein"/>
</dbReference>
<dbReference type="GO" id="GO:0005768">
    <property type="term" value="C:endosome"/>
    <property type="evidence" value="ECO:0000314"/>
    <property type="project" value="SGD"/>
</dbReference>
<dbReference type="GO" id="GO:0004869">
    <property type="term" value="F:cysteine-type endopeptidase inhibitor activity"/>
    <property type="evidence" value="ECO:0007669"/>
    <property type="project" value="UniProtKB-KW"/>
</dbReference>
<dbReference type="GO" id="GO:0004857">
    <property type="term" value="F:enzyme inhibitor activity"/>
    <property type="evidence" value="ECO:0000314"/>
    <property type="project" value="SGD"/>
</dbReference>
<dbReference type="GO" id="GO:0010992">
    <property type="term" value="P:ubiquitin recycling"/>
    <property type="evidence" value="ECO:0000315"/>
    <property type="project" value="SGD"/>
</dbReference>
<dbReference type="Gene3D" id="1.20.58.80">
    <property type="entry name" value="Phosphotransferase system, lactose/cellobiose-type IIA subunit"/>
    <property type="match status" value="1"/>
</dbReference>
<dbReference type="PANTHER" id="PTHR12947">
    <property type="entry name" value="AMSH-LIKE PROTEASE"/>
    <property type="match status" value="1"/>
</dbReference>
<dbReference type="PANTHER" id="PTHR12947:SF13">
    <property type="entry name" value="FI19924P1"/>
    <property type="match status" value="1"/>
</dbReference>
<name>RFU1_YEAST</name>
<sequence>MKSSKQLVQDAKDYRFNPAIPLRIYLKTCIGILEKAQCAFQANDLSLSFIYYFRYVDLLTNKLSRHPELLRMDASSSSSSSYIHKREYLQLIKLEVPAVCKIIESLRTQIDSQYSKLQTSLANNIAKPNINANTTPVQVEQQPLPKKSFDEYSFNQSISFFQKISNAQLNTGASSQSQATARDEAYRLNYPELPRLTFST</sequence>
<gene>
    <name type="primary">RFU1</name>
    <name type="ordered locus">YLR073C</name>
</gene>
<evidence type="ECO:0000269" key="1">
    <source>
    </source>
</evidence>
<evidence type="ECO:0000269" key="2">
    <source>
    </source>
</evidence>
<evidence type="ECO:0000269" key="3">
    <source>
    </source>
</evidence>
<evidence type="ECO:0000305" key="4"/>
<feature type="chain" id="PRO_0000247248" description="Regulator of free ubiquitin chains 1">
    <location>
        <begin position="1"/>
        <end position="200"/>
    </location>
</feature>
<protein>
    <recommendedName>
        <fullName>Regulator of free ubiquitin chains 1</fullName>
    </recommendedName>
</protein>
<keyword id="KW-0967">Endosome</keyword>
<keyword id="KW-0646">Protease inhibitor</keyword>
<keyword id="KW-1185">Reference proteome</keyword>
<keyword id="KW-0789">Thiol protease inhibitor</keyword>
<organism>
    <name type="scientific">Saccharomyces cerevisiae (strain ATCC 204508 / S288c)</name>
    <name type="common">Baker's yeast</name>
    <dbReference type="NCBI Taxonomy" id="559292"/>
    <lineage>
        <taxon>Eukaryota</taxon>
        <taxon>Fungi</taxon>
        <taxon>Dikarya</taxon>
        <taxon>Ascomycota</taxon>
        <taxon>Saccharomycotina</taxon>
        <taxon>Saccharomycetes</taxon>
        <taxon>Saccharomycetales</taxon>
        <taxon>Saccharomycetaceae</taxon>
        <taxon>Saccharomyces</taxon>
    </lineage>
</organism>